<proteinExistence type="evidence at protein level"/>
<accession>Q8CBY8</accession>
<accession>Q923A0</accession>
<accession>Q9D4X0</accession>
<organism>
    <name type="scientific">Mus musculus</name>
    <name type="common">Mouse</name>
    <dbReference type="NCBI Taxonomy" id="10090"/>
    <lineage>
        <taxon>Eukaryota</taxon>
        <taxon>Metazoa</taxon>
        <taxon>Chordata</taxon>
        <taxon>Craniata</taxon>
        <taxon>Vertebrata</taxon>
        <taxon>Euteleostomi</taxon>
        <taxon>Mammalia</taxon>
        <taxon>Eutheria</taxon>
        <taxon>Euarchontoglires</taxon>
        <taxon>Glires</taxon>
        <taxon>Rodentia</taxon>
        <taxon>Myomorpha</taxon>
        <taxon>Muroidea</taxon>
        <taxon>Muridae</taxon>
        <taxon>Murinae</taxon>
        <taxon>Mus</taxon>
        <taxon>Mus</taxon>
    </lineage>
</organism>
<evidence type="ECO:0000250" key="1">
    <source>
        <dbReference type="UniProtKB" id="A0A4X1TB62"/>
    </source>
</evidence>
<evidence type="ECO:0000250" key="2">
    <source>
        <dbReference type="UniProtKB" id="Q9QUR2"/>
    </source>
</evidence>
<evidence type="ECO:0000250" key="3">
    <source>
        <dbReference type="UniProtKB" id="Q9UJW0"/>
    </source>
</evidence>
<evidence type="ECO:0000255" key="4"/>
<evidence type="ECO:0000269" key="5">
    <source>
    </source>
</evidence>
<evidence type="ECO:0000269" key="6">
    <source>
    </source>
</evidence>
<evidence type="ECO:0000303" key="7">
    <source>
    </source>
</evidence>
<evidence type="ECO:0000305" key="8"/>
<reference key="1">
    <citation type="journal article" date="2005" name="Science">
        <title>The transcriptional landscape of the mammalian genome.</title>
        <authorList>
            <person name="Carninci P."/>
            <person name="Kasukawa T."/>
            <person name="Katayama S."/>
            <person name="Gough J."/>
            <person name="Frith M.C."/>
            <person name="Maeda N."/>
            <person name="Oyama R."/>
            <person name="Ravasi T."/>
            <person name="Lenhard B."/>
            <person name="Wells C."/>
            <person name="Kodzius R."/>
            <person name="Shimokawa K."/>
            <person name="Bajic V.B."/>
            <person name="Brenner S.E."/>
            <person name="Batalov S."/>
            <person name="Forrest A.R."/>
            <person name="Zavolan M."/>
            <person name="Davis M.J."/>
            <person name="Wilming L.G."/>
            <person name="Aidinis V."/>
            <person name="Allen J.E."/>
            <person name="Ambesi-Impiombato A."/>
            <person name="Apweiler R."/>
            <person name="Aturaliya R.N."/>
            <person name="Bailey T.L."/>
            <person name="Bansal M."/>
            <person name="Baxter L."/>
            <person name="Beisel K.W."/>
            <person name="Bersano T."/>
            <person name="Bono H."/>
            <person name="Chalk A.M."/>
            <person name="Chiu K.P."/>
            <person name="Choudhary V."/>
            <person name="Christoffels A."/>
            <person name="Clutterbuck D.R."/>
            <person name="Crowe M.L."/>
            <person name="Dalla E."/>
            <person name="Dalrymple B.P."/>
            <person name="de Bono B."/>
            <person name="Della Gatta G."/>
            <person name="di Bernardo D."/>
            <person name="Down T."/>
            <person name="Engstrom P."/>
            <person name="Fagiolini M."/>
            <person name="Faulkner G."/>
            <person name="Fletcher C.F."/>
            <person name="Fukushima T."/>
            <person name="Furuno M."/>
            <person name="Futaki S."/>
            <person name="Gariboldi M."/>
            <person name="Georgii-Hemming P."/>
            <person name="Gingeras T.R."/>
            <person name="Gojobori T."/>
            <person name="Green R.E."/>
            <person name="Gustincich S."/>
            <person name="Harbers M."/>
            <person name="Hayashi Y."/>
            <person name="Hensch T.K."/>
            <person name="Hirokawa N."/>
            <person name="Hill D."/>
            <person name="Huminiecki L."/>
            <person name="Iacono M."/>
            <person name="Ikeo K."/>
            <person name="Iwama A."/>
            <person name="Ishikawa T."/>
            <person name="Jakt M."/>
            <person name="Kanapin A."/>
            <person name="Katoh M."/>
            <person name="Kawasawa Y."/>
            <person name="Kelso J."/>
            <person name="Kitamura H."/>
            <person name="Kitano H."/>
            <person name="Kollias G."/>
            <person name="Krishnan S.P."/>
            <person name="Kruger A."/>
            <person name="Kummerfeld S.K."/>
            <person name="Kurochkin I.V."/>
            <person name="Lareau L.F."/>
            <person name="Lazarevic D."/>
            <person name="Lipovich L."/>
            <person name="Liu J."/>
            <person name="Liuni S."/>
            <person name="McWilliam S."/>
            <person name="Madan Babu M."/>
            <person name="Madera M."/>
            <person name="Marchionni L."/>
            <person name="Matsuda H."/>
            <person name="Matsuzawa S."/>
            <person name="Miki H."/>
            <person name="Mignone F."/>
            <person name="Miyake S."/>
            <person name="Morris K."/>
            <person name="Mottagui-Tabar S."/>
            <person name="Mulder N."/>
            <person name="Nakano N."/>
            <person name="Nakauchi H."/>
            <person name="Ng P."/>
            <person name="Nilsson R."/>
            <person name="Nishiguchi S."/>
            <person name="Nishikawa S."/>
            <person name="Nori F."/>
            <person name="Ohara O."/>
            <person name="Okazaki Y."/>
            <person name="Orlando V."/>
            <person name="Pang K.C."/>
            <person name="Pavan W.J."/>
            <person name="Pavesi G."/>
            <person name="Pesole G."/>
            <person name="Petrovsky N."/>
            <person name="Piazza S."/>
            <person name="Reed J."/>
            <person name="Reid J.F."/>
            <person name="Ring B.Z."/>
            <person name="Ringwald M."/>
            <person name="Rost B."/>
            <person name="Ruan Y."/>
            <person name="Salzberg S.L."/>
            <person name="Sandelin A."/>
            <person name="Schneider C."/>
            <person name="Schoenbach C."/>
            <person name="Sekiguchi K."/>
            <person name="Semple C.A."/>
            <person name="Seno S."/>
            <person name="Sessa L."/>
            <person name="Sheng Y."/>
            <person name="Shibata Y."/>
            <person name="Shimada H."/>
            <person name="Shimada K."/>
            <person name="Silva D."/>
            <person name="Sinclair B."/>
            <person name="Sperling S."/>
            <person name="Stupka E."/>
            <person name="Sugiura K."/>
            <person name="Sultana R."/>
            <person name="Takenaka Y."/>
            <person name="Taki K."/>
            <person name="Tammoja K."/>
            <person name="Tan S.L."/>
            <person name="Tang S."/>
            <person name="Taylor M.S."/>
            <person name="Tegner J."/>
            <person name="Teichmann S.A."/>
            <person name="Ueda H.R."/>
            <person name="van Nimwegen E."/>
            <person name="Verardo R."/>
            <person name="Wei C.L."/>
            <person name="Yagi K."/>
            <person name="Yamanishi H."/>
            <person name="Zabarovsky E."/>
            <person name="Zhu S."/>
            <person name="Zimmer A."/>
            <person name="Hide W."/>
            <person name="Bult C."/>
            <person name="Grimmond S.M."/>
            <person name="Teasdale R.D."/>
            <person name="Liu E.T."/>
            <person name="Brusic V."/>
            <person name="Quackenbush J."/>
            <person name="Wahlestedt C."/>
            <person name="Mattick J.S."/>
            <person name="Hume D.A."/>
            <person name="Kai C."/>
            <person name="Sasaki D."/>
            <person name="Tomaru Y."/>
            <person name="Fukuda S."/>
            <person name="Kanamori-Katayama M."/>
            <person name="Suzuki M."/>
            <person name="Aoki J."/>
            <person name="Arakawa T."/>
            <person name="Iida J."/>
            <person name="Imamura K."/>
            <person name="Itoh M."/>
            <person name="Kato T."/>
            <person name="Kawaji H."/>
            <person name="Kawagashira N."/>
            <person name="Kawashima T."/>
            <person name="Kojima M."/>
            <person name="Kondo S."/>
            <person name="Konno H."/>
            <person name="Nakano K."/>
            <person name="Ninomiya N."/>
            <person name="Nishio T."/>
            <person name="Okada M."/>
            <person name="Plessy C."/>
            <person name="Shibata K."/>
            <person name="Shiraki T."/>
            <person name="Suzuki S."/>
            <person name="Tagami M."/>
            <person name="Waki K."/>
            <person name="Watahiki A."/>
            <person name="Okamura-Oho Y."/>
            <person name="Suzuki H."/>
            <person name="Kawai J."/>
            <person name="Hayashizaki Y."/>
        </authorList>
    </citation>
    <scope>NUCLEOTIDE SEQUENCE [LARGE SCALE MRNA] (ISOFORM 1)</scope>
    <source>
        <strain>C57BL/6J</strain>
        <tissue>Diencephalon</tissue>
    </source>
</reference>
<reference key="2">
    <citation type="journal article" date="2004" name="Genome Res.">
        <title>The status, quality, and expansion of the NIH full-length cDNA project: the Mammalian Gene Collection (MGC).</title>
        <authorList>
            <consortium name="The MGC Project Team"/>
        </authorList>
    </citation>
    <scope>NUCLEOTIDE SEQUENCE [LARGE SCALE MRNA] (ISOFORM 2)</scope>
    <source>
        <strain>FVB/N</strain>
        <tissue>Mammary tumor</tissue>
    </source>
</reference>
<reference key="3">
    <citation type="journal article" date="2008" name="Cell">
        <title>An ankyrin-based mechanism for functional organization of dystrophin and dystroglycan.</title>
        <authorList>
            <person name="Ayalon G."/>
            <person name="Davis J.Q."/>
            <person name="Scotland P.B."/>
            <person name="Bennett V."/>
        </authorList>
    </citation>
    <scope>INTERACTION WITH ANK2</scope>
    <scope>SUBCELLULAR LOCATION</scope>
</reference>
<reference key="4">
    <citation type="journal article" date="2010" name="Cell">
        <title>A tissue-specific atlas of mouse protein phosphorylation and expression.</title>
        <authorList>
            <person name="Huttlin E.L."/>
            <person name="Jedrychowski M.P."/>
            <person name="Elias J.E."/>
            <person name="Goswami T."/>
            <person name="Rad R."/>
            <person name="Beausoleil S.A."/>
            <person name="Villen J."/>
            <person name="Haas W."/>
            <person name="Sowa M.E."/>
            <person name="Gygi S.P."/>
        </authorList>
    </citation>
    <scope>IDENTIFICATION BY MASS SPECTROMETRY [LARGE SCALE ANALYSIS]</scope>
    <source>
        <tissue>Brain</tissue>
        <tissue>Brown adipose tissue</tissue>
        <tissue>Heart</tissue>
        <tissue>Kidney</tissue>
        <tissue>Lung</tissue>
        <tissue>Pancreas</tissue>
        <tissue>Spleen</tissue>
        <tissue>Testis</tissue>
    </source>
</reference>
<reference key="5">
    <citation type="journal article" date="2021" name="J. Diabetes Investig.">
        <title>N4BP2L1 interacts with dynactin and contributes to GLUT4 trafficking and glucose uptake in adipocytes.</title>
        <authorList>
            <person name="Watanabe K."/>
            <person name="Matsumoto A."/>
            <person name="Tsuda H."/>
            <person name="Iwamoto S."/>
        </authorList>
    </citation>
    <scope>INTERACTION WITH N4BP2L1</scope>
</reference>
<comment type="function">
    <text evidence="1">Part of the dynactin complex that activates the molecular motor dynein for ultra-processive transport along microtubules.</text>
</comment>
<comment type="subunit">
    <text evidence="1 3 5 6">Subunit of dynactin, a multiprotein complex part of a tripartite complex with dynein and a adapter, such as BICDL1, BICD2 or HOOK3. The dynactin complex is built around ACTR1A/ACTB filament and consists of an actin-related filament composed of a shoulder domain, a pointed end and a barbed end. Its length is defined by its flexible shoulder domain. The soulder is composed of 2 DCTN1 subunits, 4 DCTN2 and 2 DCTN3. The 4 DCNT2 (via N-terminus) bind the ACTR1A filament and act as molecular rulers to determine the length. The pointed end is important for binding dynein-dynactin cargo adapters. Consists of 4 subunits: ACTR10, DCNT4, DCTN5 and DCTN6. The barbed end is composed of a CAPZA1:CAPZB heterodimers, which binds ACTR1A/ACTB filament and dynactin and stabilizes dynactin (By similarity). Interacts with ATP7B, but not ATP7A, in a copper-dependent manner (By similarity). Interacts with ANK2; this interaction is required for localization at costameres (PubMed:19109891). Interacts with N4BP2L1 (PubMed:34197691).</text>
</comment>
<comment type="subcellular location">
    <subcellularLocation>
        <location evidence="3">Cytoplasm</location>
        <location evidence="3">Cytoskeleton</location>
    </subcellularLocation>
    <subcellularLocation>
        <location evidence="3">Cytoplasm</location>
        <location evidence="3">Cytoskeleton</location>
        <location evidence="3">Microtubule organizing center</location>
        <location evidence="3">Centrosome</location>
    </subcellularLocation>
    <subcellularLocation>
        <location evidence="2">Cytoplasm</location>
        <location evidence="2">Cytoskeleton</location>
        <location evidence="2">Stress fiber</location>
    </subcellularLocation>
    <subcellularLocation>
        <location evidence="2">Cytoplasm</location>
        <location evidence="2">Cell cortex</location>
    </subcellularLocation>
    <subcellularLocation>
        <location evidence="5">Cytoplasm</location>
        <location evidence="5">Myofibril</location>
        <location evidence="5">Sarcomere</location>
    </subcellularLocation>
    <text evidence="2 3 5">Has a punctate cytoplasmic distribution as well as centrosomal distribution typical of dynactin (By similarity). Overexpression in cultured mammalian cells revealed colocalization with cortical actin, stress fibers, and focal adhesion sites, sites of potential interaction between microtubules and the cell cortex (By similarity). In skeletal muscles, costamere localization requires the presence of ANK2 (PubMed:19109891).</text>
</comment>
<comment type="alternative products">
    <event type="alternative splicing"/>
    <isoform>
        <id>Q8CBY8-1</id>
        <name>1</name>
        <sequence type="displayed"/>
    </isoform>
    <isoform>
        <id>Q8CBY8-2</id>
        <name>2</name>
        <sequence type="described" ref="VSP_013573"/>
    </isoform>
</comment>
<comment type="similarity">
    <text evidence="8">Belongs to the dynactin subunit 4 family.</text>
</comment>
<keyword id="KW-0007">Acetylation</keyword>
<keyword id="KW-0025">Alternative splicing</keyword>
<keyword id="KW-0175">Coiled coil</keyword>
<keyword id="KW-0963">Cytoplasm</keyword>
<keyword id="KW-0206">Cytoskeleton</keyword>
<keyword id="KW-1017">Isopeptide bond</keyword>
<keyword id="KW-0597">Phosphoprotein</keyword>
<keyword id="KW-1185">Reference proteome</keyword>
<keyword id="KW-0832">Ubl conjugation</keyword>
<feature type="initiator methionine" description="Removed" evidence="3">
    <location>
        <position position="1"/>
    </location>
</feature>
<feature type="chain" id="PRO_0000079824" description="Dynactin subunit 4">
    <location>
        <begin position="2"/>
        <end position="467"/>
    </location>
</feature>
<feature type="coiled-coil region" evidence="4">
    <location>
        <begin position="152"/>
        <end position="172"/>
    </location>
</feature>
<feature type="modified residue" description="N-acetylalanine" evidence="3">
    <location>
        <position position="2"/>
    </location>
</feature>
<feature type="modified residue" description="Phosphoserine" evidence="3">
    <location>
        <position position="203"/>
    </location>
</feature>
<feature type="modified residue" description="Phosphothreonine" evidence="2">
    <location>
        <position position="414"/>
    </location>
</feature>
<feature type="cross-link" description="Glycyl lysine isopeptide (Lys-Gly) (interchain with G-Cter in SUMO2)" evidence="3">
    <location>
        <position position="222"/>
    </location>
</feature>
<feature type="splice variant" id="VSP_013573" description="In isoform 2." evidence="7">
    <location>
        <begin position="180"/>
        <end position="186"/>
    </location>
</feature>
<gene>
    <name type="primary">Dctn4</name>
</gene>
<protein>
    <recommendedName>
        <fullName>Dynactin subunit 4</fullName>
    </recommendedName>
    <alternativeName>
        <fullName>Dynactin subunit p62</fullName>
    </alternativeName>
</protein>
<dbReference type="EMBL" id="AK016059">
    <property type="protein sequence ID" value="BAB30095.1"/>
    <property type="molecule type" value="mRNA"/>
</dbReference>
<dbReference type="EMBL" id="AK034292">
    <property type="protein sequence ID" value="BAC28661.1"/>
    <property type="molecule type" value="mRNA"/>
</dbReference>
<dbReference type="EMBL" id="BC006677">
    <property type="protein sequence ID" value="AAH06677.1"/>
    <property type="molecule type" value="mRNA"/>
</dbReference>
<dbReference type="EMBL" id="BC034725">
    <property type="protein sequence ID" value="AAH34725.1"/>
    <property type="molecule type" value="mRNA"/>
</dbReference>
<dbReference type="CCDS" id="CCDS37832.1">
    <molecule id="Q8CBY8-2"/>
</dbReference>
<dbReference type="CCDS" id="CCDS89246.1">
    <molecule id="Q8CBY8-1"/>
</dbReference>
<dbReference type="RefSeq" id="NP_001344391.1">
    <molecule id="Q8CBY8-1"/>
    <property type="nucleotide sequence ID" value="NM_001357462.1"/>
</dbReference>
<dbReference type="RefSeq" id="NP_080578.1">
    <molecule id="Q8CBY8-2"/>
    <property type="nucleotide sequence ID" value="NM_026302.4"/>
</dbReference>
<dbReference type="RefSeq" id="XP_006526252.1">
    <property type="nucleotide sequence ID" value="XM_006526189.3"/>
</dbReference>
<dbReference type="SMR" id="Q8CBY8"/>
<dbReference type="BioGRID" id="212349">
    <property type="interactions" value="25"/>
</dbReference>
<dbReference type="FunCoup" id="Q8CBY8">
    <property type="interactions" value="2615"/>
</dbReference>
<dbReference type="IntAct" id="Q8CBY8">
    <property type="interactions" value="16"/>
</dbReference>
<dbReference type="MINT" id="Q8CBY8"/>
<dbReference type="STRING" id="10090.ENSMUSP00000025505"/>
<dbReference type="GlyGen" id="Q8CBY8">
    <property type="glycosylation" value="2 sites, 1 O-linked glycan (2 sites)"/>
</dbReference>
<dbReference type="iPTMnet" id="Q8CBY8"/>
<dbReference type="PhosphoSitePlus" id="Q8CBY8"/>
<dbReference type="SwissPalm" id="Q8CBY8"/>
<dbReference type="PaxDb" id="10090-ENSMUSP00000025505"/>
<dbReference type="PeptideAtlas" id="Q8CBY8"/>
<dbReference type="ProteomicsDB" id="279316">
    <molecule id="Q8CBY8-1"/>
</dbReference>
<dbReference type="ProteomicsDB" id="279317">
    <molecule id="Q8CBY8-2"/>
</dbReference>
<dbReference type="Pumba" id="Q8CBY8"/>
<dbReference type="Antibodypedia" id="4309">
    <property type="antibodies" value="229 antibodies from 28 providers"/>
</dbReference>
<dbReference type="DNASU" id="67665"/>
<dbReference type="Ensembl" id="ENSMUST00000025505.7">
    <molecule id="Q8CBY8-2"/>
    <property type="protein sequence ID" value="ENSMUSP00000025505.6"/>
    <property type="gene ID" value="ENSMUSG00000024603.9"/>
</dbReference>
<dbReference type="Ensembl" id="ENSMUST00000223984.2">
    <molecule id="Q8CBY8-1"/>
    <property type="protein sequence ID" value="ENSMUSP00000153008.2"/>
    <property type="gene ID" value="ENSMUSG00000024603.9"/>
</dbReference>
<dbReference type="GeneID" id="67665"/>
<dbReference type="KEGG" id="mmu:67665"/>
<dbReference type="UCSC" id="uc008fak.1">
    <molecule id="Q8CBY8-1"/>
    <property type="organism name" value="mouse"/>
</dbReference>
<dbReference type="AGR" id="MGI:1914915"/>
<dbReference type="CTD" id="51164"/>
<dbReference type="MGI" id="MGI:1914915">
    <property type="gene designation" value="Dctn4"/>
</dbReference>
<dbReference type="VEuPathDB" id="HostDB:ENSMUSG00000024603"/>
<dbReference type="eggNOG" id="KOG3896">
    <property type="taxonomic scope" value="Eukaryota"/>
</dbReference>
<dbReference type="GeneTree" id="ENSGT00390000006954"/>
<dbReference type="HOGENOM" id="CLU_030384_0_0_1"/>
<dbReference type="InParanoid" id="Q8CBY8"/>
<dbReference type="OMA" id="FIVWRKA"/>
<dbReference type="OrthoDB" id="283815at2759"/>
<dbReference type="PhylomeDB" id="Q8CBY8"/>
<dbReference type="TreeFam" id="TF105249"/>
<dbReference type="Reactome" id="R-MMU-2132295">
    <property type="pathway name" value="MHC class II antigen presentation"/>
</dbReference>
<dbReference type="Reactome" id="R-MMU-3371497">
    <property type="pathway name" value="HSP90 chaperone cycle for steroid hormone receptors (SHR) in the presence of ligand"/>
</dbReference>
<dbReference type="Reactome" id="R-MMU-6807878">
    <property type="pathway name" value="COPI-mediated anterograde transport"/>
</dbReference>
<dbReference type="Reactome" id="R-MMU-6811436">
    <property type="pathway name" value="COPI-independent Golgi-to-ER retrograde traffic"/>
</dbReference>
<dbReference type="BioGRID-ORCS" id="67665">
    <property type="hits" value="22 hits in 76 CRISPR screens"/>
</dbReference>
<dbReference type="CD-CODE" id="CE726F99">
    <property type="entry name" value="Postsynaptic density"/>
</dbReference>
<dbReference type="ChiTaRS" id="Dctn4">
    <property type="organism name" value="mouse"/>
</dbReference>
<dbReference type="PRO" id="PR:Q8CBY8"/>
<dbReference type="Proteomes" id="UP000000589">
    <property type="component" value="Chromosome 18"/>
</dbReference>
<dbReference type="RNAct" id="Q8CBY8">
    <property type="molecule type" value="protein"/>
</dbReference>
<dbReference type="Bgee" id="ENSMUSG00000024603">
    <property type="expression patterns" value="Expressed in undifferentiated genital tubercle and 248 other cell types or tissues"/>
</dbReference>
<dbReference type="ExpressionAtlas" id="Q8CBY8">
    <property type="expression patterns" value="baseline and differential"/>
</dbReference>
<dbReference type="GO" id="GO:0005938">
    <property type="term" value="C:cell cortex"/>
    <property type="evidence" value="ECO:0007669"/>
    <property type="project" value="UniProtKB-SubCell"/>
</dbReference>
<dbReference type="GO" id="GO:0005813">
    <property type="term" value="C:centrosome"/>
    <property type="evidence" value="ECO:0007669"/>
    <property type="project" value="UniProtKB-SubCell"/>
</dbReference>
<dbReference type="GO" id="GO:0005868">
    <property type="term" value="C:cytoplasmic dynein complex"/>
    <property type="evidence" value="ECO:0000266"/>
    <property type="project" value="MGI"/>
</dbReference>
<dbReference type="GO" id="GO:0005869">
    <property type="term" value="C:dynactin complex"/>
    <property type="evidence" value="ECO:0007669"/>
    <property type="project" value="InterPro"/>
</dbReference>
<dbReference type="GO" id="GO:0005925">
    <property type="term" value="C:focal adhesion"/>
    <property type="evidence" value="ECO:0007669"/>
    <property type="project" value="Ensembl"/>
</dbReference>
<dbReference type="GO" id="GO:0000776">
    <property type="term" value="C:kinetochore"/>
    <property type="evidence" value="ECO:0007669"/>
    <property type="project" value="Ensembl"/>
</dbReference>
<dbReference type="GO" id="GO:0030017">
    <property type="term" value="C:sarcomere"/>
    <property type="evidence" value="ECO:0007669"/>
    <property type="project" value="UniProtKB-SubCell"/>
</dbReference>
<dbReference type="GO" id="GO:0000922">
    <property type="term" value="C:spindle pole"/>
    <property type="evidence" value="ECO:0007669"/>
    <property type="project" value="Ensembl"/>
</dbReference>
<dbReference type="GO" id="GO:0001725">
    <property type="term" value="C:stress fiber"/>
    <property type="evidence" value="ECO:0007669"/>
    <property type="project" value="UniProtKB-SubCell"/>
</dbReference>
<dbReference type="InterPro" id="IPR008603">
    <property type="entry name" value="DCTN4"/>
</dbReference>
<dbReference type="PANTHER" id="PTHR13034">
    <property type="entry name" value="DYNACTIN P62 SUBUNIT"/>
    <property type="match status" value="1"/>
</dbReference>
<dbReference type="PANTHER" id="PTHR13034:SF2">
    <property type="entry name" value="DYNACTIN SUBUNIT 4"/>
    <property type="match status" value="1"/>
</dbReference>
<dbReference type="Pfam" id="PF05502">
    <property type="entry name" value="Dynactin_p62"/>
    <property type="match status" value="2"/>
</dbReference>
<name>DCTN4_MOUSE</name>
<sequence>MASLLQSERVLYLVQGEKKVRAPLSQLYFCRYCSELRSLECVSHEVDSHYCPSCLENMPSAEAKLKKNRCANCFDCPGCMHTLSTRATSISTQLPDDPAKTTMKKAYYLACGFCRWTSRDVGMADKSVASGGWQEPENPHTQRMNKLIEYYQQLAQKEKVERDRKKLARRRNYMPLAFSQHTIHVVDKYSLGTRLQRPRAGASISTLAGLSLREGEDQKEVKIEPAQAVAEVEPLPEDYYTRPVNLTEVTTLQQRLLQPDLQPVSASQLYPRHKHLLIKRSLRCRKCEHNLSKPEFNPTSIKFKIQLVAVNYIPEVRIMSIPNLRYMKESQVLLTLTNPVENLTHVTLLECDEGDPDNINSTAKVVVPPKELILAGKDAAAEYDELAEPQDFQDDPDIVAFRKANKVGIFIKVTPQREEGEVTVCFKMKHDFKNLAAPIRPVEEGDQGTEVIWLTQHVELSFGPLLP</sequence>